<proteinExistence type="inferred from homology"/>
<keyword id="KW-0004">4Fe-4S</keyword>
<keyword id="KW-0963">Cytoplasm</keyword>
<keyword id="KW-0408">Iron</keyword>
<keyword id="KW-0411">Iron-sulfur</keyword>
<keyword id="KW-0479">Metal-binding</keyword>
<keyword id="KW-1185">Reference proteome</keyword>
<keyword id="KW-0949">S-adenosyl-L-methionine</keyword>
<keyword id="KW-0808">Transferase</keyword>
<keyword id="KW-0819">tRNA processing</keyword>
<accession>B7MFS7</accession>
<evidence type="ECO:0000255" key="1">
    <source>
        <dbReference type="HAMAP-Rule" id="MF_01864"/>
    </source>
</evidence>
<evidence type="ECO:0000255" key="2">
    <source>
        <dbReference type="PROSITE-ProRule" id="PRU01266"/>
    </source>
</evidence>
<feature type="chain" id="PRO_0000374291" description="tRNA-2-methylthio-N(6)-dimethylallyladenosine synthase">
    <location>
        <begin position="1"/>
        <end position="474"/>
    </location>
</feature>
<feature type="domain" description="MTTase N-terminal" evidence="1">
    <location>
        <begin position="3"/>
        <end position="120"/>
    </location>
</feature>
<feature type="domain" description="Radical SAM core" evidence="2">
    <location>
        <begin position="143"/>
        <end position="375"/>
    </location>
</feature>
<feature type="domain" description="TRAM" evidence="1">
    <location>
        <begin position="378"/>
        <end position="441"/>
    </location>
</feature>
<feature type="binding site" evidence="1">
    <location>
        <position position="12"/>
    </location>
    <ligand>
        <name>[4Fe-4S] cluster</name>
        <dbReference type="ChEBI" id="CHEBI:49883"/>
        <label>1</label>
    </ligand>
</feature>
<feature type="binding site" evidence="1">
    <location>
        <position position="49"/>
    </location>
    <ligand>
        <name>[4Fe-4S] cluster</name>
        <dbReference type="ChEBI" id="CHEBI:49883"/>
        <label>1</label>
    </ligand>
</feature>
<feature type="binding site" evidence="1">
    <location>
        <position position="83"/>
    </location>
    <ligand>
        <name>[4Fe-4S] cluster</name>
        <dbReference type="ChEBI" id="CHEBI:49883"/>
        <label>1</label>
    </ligand>
</feature>
<feature type="binding site" evidence="1">
    <location>
        <position position="157"/>
    </location>
    <ligand>
        <name>[4Fe-4S] cluster</name>
        <dbReference type="ChEBI" id="CHEBI:49883"/>
        <label>2</label>
        <note>4Fe-4S-S-AdoMet</note>
    </ligand>
</feature>
<feature type="binding site" evidence="1">
    <location>
        <position position="161"/>
    </location>
    <ligand>
        <name>[4Fe-4S] cluster</name>
        <dbReference type="ChEBI" id="CHEBI:49883"/>
        <label>2</label>
        <note>4Fe-4S-S-AdoMet</note>
    </ligand>
</feature>
<feature type="binding site" evidence="1">
    <location>
        <position position="164"/>
    </location>
    <ligand>
        <name>[4Fe-4S] cluster</name>
        <dbReference type="ChEBI" id="CHEBI:49883"/>
        <label>2</label>
        <note>4Fe-4S-S-AdoMet</note>
    </ligand>
</feature>
<dbReference type="EC" id="2.8.4.3" evidence="1"/>
<dbReference type="EMBL" id="CU928161">
    <property type="protein sequence ID" value="CAR02036.1"/>
    <property type="molecule type" value="Genomic_DNA"/>
</dbReference>
<dbReference type="RefSeq" id="WP_000162737.1">
    <property type="nucleotide sequence ID" value="NC_011742.1"/>
</dbReference>
<dbReference type="SMR" id="B7MFS7"/>
<dbReference type="KEGG" id="ecz:ECS88_0696"/>
<dbReference type="HOGENOM" id="CLU_018697_2_0_6"/>
<dbReference type="Proteomes" id="UP000000747">
    <property type="component" value="Chromosome"/>
</dbReference>
<dbReference type="GO" id="GO:0005829">
    <property type="term" value="C:cytosol"/>
    <property type="evidence" value="ECO:0007669"/>
    <property type="project" value="TreeGrafter"/>
</dbReference>
<dbReference type="GO" id="GO:0051539">
    <property type="term" value="F:4 iron, 4 sulfur cluster binding"/>
    <property type="evidence" value="ECO:0007669"/>
    <property type="project" value="UniProtKB-UniRule"/>
</dbReference>
<dbReference type="GO" id="GO:0046872">
    <property type="term" value="F:metal ion binding"/>
    <property type="evidence" value="ECO:0007669"/>
    <property type="project" value="UniProtKB-KW"/>
</dbReference>
<dbReference type="GO" id="GO:0035597">
    <property type="term" value="F:N6-isopentenyladenosine methylthiotransferase activity"/>
    <property type="evidence" value="ECO:0007669"/>
    <property type="project" value="TreeGrafter"/>
</dbReference>
<dbReference type="CDD" id="cd01335">
    <property type="entry name" value="Radical_SAM"/>
    <property type="match status" value="1"/>
</dbReference>
<dbReference type="FunFam" id="3.40.50.12160:FF:000001">
    <property type="entry name" value="tRNA-2-methylthio-N(6)-dimethylallyladenosine synthase"/>
    <property type="match status" value="1"/>
</dbReference>
<dbReference type="FunFam" id="3.80.30.20:FF:000001">
    <property type="entry name" value="tRNA-2-methylthio-N(6)-dimethylallyladenosine synthase 2"/>
    <property type="match status" value="1"/>
</dbReference>
<dbReference type="Gene3D" id="3.40.50.12160">
    <property type="entry name" value="Methylthiotransferase, N-terminal domain"/>
    <property type="match status" value="1"/>
</dbReference>
<dbReference type="Gene3D" id="3.80.30.20">
    <property type="entry name" value="tm_1862 like domain"/>
    <property type="match status" value="1"/>
</dbReference>
<dbReference type="HAMAP" id="MF_01864">
    <property type="entry name" value="tRNA_metthiotr_MiaB"/>
    <property type="match status" value="1"/>
</dbReference>
<dbReference type="InterPro" id="IPR006638">
    <property type="entry name" value="Elp3/MiaA/NifB-like_rSAM"/>
</dbReference>
<dbReference type="InterPro" id="IPR005839">
    <property type="entry name" value="Methylthiotransferase"/>
</dbReference>
<dbReference type="InterPro" id="IPR020612">
    <property type="entry name" value="Methylthiotransferase_CS"/>
</dbReference>
<dbReference type="InterPro" id="IPR013848">
    <property type="entry name" value="Methylthiotransferase_N"/>
</dbReference>
<dbReference type="InterPro" id="IPR038135">
    <property type="entry name" value="Methylthiotransferase_N_sf"/>
</dbReference>
<dbReference type="InterPro" id="IPR006463">
    <property type="entry name" value="MiaB_methiolase"/>
</dbReference>
<dbReference type="InterPro" id="IPR007197">
    <property type="entry name" value="rSAM"/>
</dbReference>
<dbReference type="InterPro" id="IPR023404">
    <property type="entry name" value="rSAM_horseshoe"/>
</dbReference>
<dbReference type="InterPro" id="IPR002792">
    <property type="entry name" value="TRAM_dom"/>
</dbReference>
<dbReference type="NCBIfam" id="TIGR01574">
    <property type="entry name" value="miaB-methiolase"/>
    <property type="match status" value="1"/>
</dbReference>
<dbReference type="NCBIfam" id="TIGR00089">
    <property type="entry name" value="MiaB/RimO family radical SAM methylthiotransferase"/>
    <property type="match status" value="1"/>
</dbReference>
<dbReference type="PANTHER" id="PTHR43020">
    <property type="entry name" value="CDK5 REGULATORY SUBUNIT-ASSOCIATED PROTEIN 1"/>
    <property type="match status" value="1"/>
</dbReference>
<dbReference type="PANTHER" id="PTHR43020:SF2">
    <property type="entry name" value="MITOCHONDRIAL TRNA METHYLTHIOTRANSFERASE CDK5RAP1"/>
    <property type="match status" value="1"/>
</dbReference>
<dbReference type="Pfam" id="PF04055">
    <property type="entry name" value="Radical_SAM"/>
    <property type="match status" value="1"/>
</dbReference>
<dbReference type="Pfam" id="PF01938">
    <property type="entry name" value="TRAM"/>
    <property type="match status" value="1"/>
</dbReference>
<dbReference type="Pfam" id="PF00919">
    <property type="entry name" value="UPF0004"/>
    <property type="match status" value="1"/>
</dbReference>
<dbReference type="SFLD" id="SFLDF00273">
    <property type="entry name" value="(dimethylallyl)adenosine_tRNA"/>
    <property type="match status" value="1"/>
</dbReference>
<dbReference type="SFLD" id="SFLDG01082">
    <property type="entry name" value="B12-binding_domain_containing"/>
    <property type="match status" value="1"/>
</dbReference>
<dbReference type="SFLD" id="SFLDS00029">
    <property type="entry name" value="Radical_SAM"/>
    <property type="match status" value="1"/>
</dbReference>
<dbReference type="SMART" id="SM00729">
    <property type="entry name" value="Elp3"/>
    <property type="match status" value="1"/>
</dbReference>
<dbReference type="SUPFAM" id="SSF102114">
    <property type="entry name" value="Radical SAM enzymes"/>
    <property type="match status" value="1"/>
</dbReference>
<dbReference type="PROSITE" id="PS51449">
    <property type="entry name" value="MTTASE_N"/>
    <property type="match status" value="1"/>
</dbReference>
<dbReference type="PROSITE" id="PS01278">
    <property type="entry name" value="MTTASE_RADICAL"/>
    <property type="match status" value="1"/>
</dbReference>
<dbReference type="PROSITE" id="PS51918">
    <property type="entry name" value="RADICAL_SAM"/>
    <property type="match status" value="1"/>
</dbReference>
<dbReference type="PROSITE" id="PS50926">
    <property type="entry name" value="TRAM"/>
    <property type="match status" value="1"/>
</dbReference>
<reference key="1">
    <citation type="journal article" date="2009" name="PLoS Genet.">
        <title>Organised genome dynamics in the Escherichia coli species results in highly diverse adaptive paths.</title>
        <authorList>
            <person name="Touchon M."/>
            <person name="Hoede C."/>
            <person name="Tenaillon O."/>
            <person name="Barbe V."/>
            <person name="Baeriswyl S."/>
            <person name="Bidet P."/>
            <person name="Bingen E."/>
            <person name="Bonacorsi S."/>
            <person name="Bouchier C."/>
            <person name="Bouvet O."/>
            <person name="Calteau A."/>
            <person name="Chiapello H."/>
            <person name="Clermont O."/>
            <person name="Cruveiller S."/>
            <person name="Danchin A."/>
            <person name="Diard M."/>
            <person name="Dossat C."/>
            <person name="Karoui M.E."/>
            <person name="Frapy E."/>
            <person name="Garry L."/>
            <person name="Ghigo J.M."/>
            <person name="Gilles A.M."/>
            <person name="Johnson J."/>
            <person name="Le Bouguenec C."/>
            <person name="Lescat M."/>
            <person name="Mangenot S."/>
            <person name="Martinez-Jehanne V."/>
            <person name="Matic I."/>
            <person name="Nassif X."/>
            <person name="Oztas S."/>
            <person name="Petit M.A."/>
            <person name="Pichon C."/>
            <person name="Rouy Z."/>
            <person name="Ruf C.S."/>
            <person name="Schneider D."/>
            <person name="Tourret J."/>
            <person name="Vacherie B."/>
            <person name="Vallenet D."/>
            <person name="Medigue C."/>
            <person name="Rocha E.P.C."/>
            <person name="Denamur E."/>
        </authorList>
    </citation>
    <scope>NUCLEOTIDE SEQUENCE [LARGE SCALE GENOMIC DNA]</scope>
    <source>
        <strain>S88 / ExPEC</strain>
    </source>
</reference>
<sequence>MTKKLHIKTWGCQMNEYDSSKMADLLDATHGYQLTDVAEEADVLLLNTCSIREKAQEKVFHQLGRWKLLKEKNPDLIIGVGGCVASQEGEHIRQRAHYVDIIFGPQTLHRLPEMINSVRGDRSPVVDISFPEIEKFDRLPEPRAEGPTAFVSIMEGCNKYCTYCVVPYTRGEEVSRPSDDILFEIAQLAAQGVREVNLLGQNVNAWRGENYDGTTGSFADLLRLVAAIDGIDRIRFTTSHPIEFTDDIIEVYRDTPELVSFLHLPVQSGSDRILNLMGRTHTALEYKAIIRKLRAARPDIQISSDFIVGFPGETTDDFEKTMKLIADVNFDMSYSFIFSARPGTPAADMVDDVPEEEKKQRLYILQERINQQAMAWSRRMLGTTQRILVEGTSRKSIMELSGRTENNRVVNFEGTPDMIGKFVDVEITDVYPNSLRGKVVRTEDEMGLRVAETPESVIARTRKENDLGVGYYQP</sequence>
<protein>
    <recommendedName>
        <fullName evidence="1">tRNA-2-methylthio-N(6)-dimethylallyladenosine synthase</fullName>
        <ecNumber evidence="1">2.8.4.3</ecNumber>
    </recommendedName>
    <alternativeName>
        <fullName evidence="1">(Dimethylallyl)adenosine tRNA methylthiotransferase MiaB</fullName>
    </alternativeName>
    <alternativeName>
        <fullName evidence="1">tRNA-i(6)A37 methylthiotransferase</fullName>
    </alternativeName>
</protein>
<comment type="function">
    <text evidence="1">Catalyzes the methylthiolation of N6-(dimethylallyl)adenosine (i(6)A), leading to the formation of 2-methylthio-N6-(dimethylallyl)adenosine (ms(2)i(6)A) at position 37 in tRNAs that read codons beginning with uridine.</text>
</comment>
<comment type="catalytic activity">
    <reaction evidence="1">
        <text>N(6)-dimethylallyladenosine(37) in tRNA + (sulfur carrier)-SH + AH2 + 2 S-adenosyl-L-methionine = 2-methylsulfanyl-N(6)-dimethylallyladenosine(37) in tRNA + (sulfur carrier)-H + 5'-deoxyadenosine + L-methionine + A + S-adenosyl-L-homocysteine + 2 H(+)</text>
        <dbReference type="Rhea" id="RHEA:37067"/>
        <dbReference type="Rhea" id="RHEA-COMP:10375"/>
        <dbReference type="Rhea" id="RHEA-COMP:10376"/>
        <dbReference type="Rhea" id="RHEA-COMP:14737"/>
        <dbReference type="Rhea" id="RHEA-COMP:14739"/>
        <dbReference type="ChEBI" id="CHEBI:13193"/>
        <dbReference type="ChEBI" id="CHEBI:15378"/>
        <dbReference type="ChEBI" id="CHEBI:17319"/>
        <dbReference type="ChEBI" id="CHEBI:17499"/>
        <dbReference type="ChEBI" id="CHEBI:29917"/>
        <dbReference type="ChEBI" id="CHEBI:57844"/>
        <dbReference type="ChEBI" id="CHEBI:57856"/>
        <dbReference type="ChEBI" id="CHEBI:59789"/>
        <dbReference type="ChEBI" id="CHEBI:64428"/>
        <dbReference type="ChEBI" id="CHEBI:74415"/>
        <dbReference type="ChEBI" id="CHEBI:74417"/>
        <dbReference type="EC" id="2.8.4.3"/>
    </reaction>
</comment>
<comment type="cofactor">
    <cofactor evidence="1">
        <name>[4Fe-4S] cluster</name>
        <dbReference type="ChEBI" id="CHEBI:49883"/>
    </cofactor>
    <text evidence="1">Binds 2 [4Fe-4S] clusters. One cluster is coordinated with 3 cysteines and an exchangeable S-adenosyl-L-methionine.</text>
</comment>
<comment type="subunit">
    <text evidence="1">Monomer.</text>
</comment>
<comment type="subcellular location">
    <subcellularLocation>
        <location evidence="1">Cytoplasm</location>
    </subcellularLocation>
</comment>
<comment type="similarity">
    <text evidence="1">Belongs to the methylthiotransferase family. MiaB subfamily.</text>
</comment>
<organism>
    <name type="scientific">Escherichia coli O45:K1 (strain S88 / ExPEC)</name>
    <dbReference type="NCBI Taxonomy" id="585035"/>
    <lineage>
        <taxon>Bacteria</taxon>
        <taxon>Pseudomonadati</taxon>
        <taxon>Pseudomonadota</taxon>
        <taxon>Gammaproteobacteria</taxon>
        <taxon>Enterobacterales</taxon>
        <taxon>Enterobacteriaceae</taxon>
        <taxon>Escherichia</taxon>
    </lineage>
</organism>
<gene>
    <name evidence="1" type="primary">miaB</name>
    <name type="ordered locus">ECS88_0696</name>
</gene>
<name>MIAB_ECO45</name>